<reference key="1">
    <citation type="submission" date="1998-09" db="EMBL/GenBank/DDBJ databases">
        <authorList>
            <person name="Slusarenko A.J."/>
            <person name="Gehring T."/>
            <person name="Kruse C.M."/>
            <person name="Rempulska Bujas G."/>
        </authorList>
    </citation>
    <scope>NUCLEOTIDE SEQUENCE [GENOMIC DNA]</scope>
    <source>
        <strain>cv. Wassilewskija</strain>
    </source>
</reference>
<reference key="2">
    <citation type="journal article" date="2000" name="Nature">
        <title>Sequence and analysis of chromosome 1 of the plant Arabidopsis thaliana.</title>
        <authorList>
            <person name="Theologis A."/>
            <person name="Ecker J.R."/>
            <person name="Palm C.J."/>
            <person name="Federspiel N.A."/>
            <person name="Kaul S."/>
            <person name="White O."/>
            <person name="Alonso J."/>
            <person name="Altafi H."/>
            <person name="Araujo R."/>
            <person name="Bowman C.L."/>
            <person name="Brooks S.Y."/>
            <person name="Buehler E."/>
            <person name="Chan A."/>
            <person name="Chao Q."/>
            <person name="Chen H."/>
            <person name="Cheuk R.F."/>
            <person name="Chin C.W."/>
            <person name="Chung M.K."/>
            <person name="Conn L."/>
            <person name="Conway A.B."/>
            <person name="Conway A.R."/>
            <person name="Creasy T.H."/>
            <person name="Dewar K."/>
            <person name="Dunn P."/>
            <person name="Etgu P."/>
            <person name="Feldblyum T.V."/>
            <person name="Feng J.-D."/>
            <person name="Fong B."/>
            <person name="Fujii C.Y."/>
            <person name="Gill J.E."/>
            <person name="Goldsmith A.D."/>
            <person name="Haas B."/>
            <person name="Hansen N.F."/>
            <person name="Hughes B."/>
            <person name="Huizar L."/>
            <person name="Hunter J.L."/>
            <person name="Jenkins J."/>
            <person name="Johnson-Hopson C."/>
            <person name="Khan S."/>
            <person name="Khaykin E."/>
            <person name="Kim C.J."/>
            <person name="Koo H.L."/>
            <person name="Kremenetskaia I."/>
            <person name="Kurtz D.B."/>
            <person name="Kwan A."/>
            <person name="Lam B."/>
            <person name="Langin-Hooper S."/>
            <person name="Lee A."/>
            <person name="Lee J.M."/>
            <person name="Lenz C.A."/>
            <person name="Li J.H."/>
            <person name="Li Y.-P."/>
            <person name="Lin X."/>
            <person name="Liu S.X."/>
            <person name="Liu Z.A."/>
            <person name="Luros J.S."/>
            <person name="Maiti R."/>
            <person name="Marziali A."/>
            <person name="Militscher J."/>
            <person name="Miranda M."/>
            <person name="Nguyen M."/>
            <person name="Nierman W.C."/>
            <person name="Osborne B.I."/>
            <person name="Pai G."/>
            <person name="Peterson J."/>
            <person name="Pham P.K."/>
            <person name="Rizzo M."/>
            <person name="Rooney T."/>
            <person name="Rowley D."/>
            <person name="Sakano H."/>
            <person name="Salzberg S.L."/>
            <person name="Schwartz J.R."/>
            <person name="Shinn P."/>
            <person name="Southwick A.M."/>
            <person name="Sun H."/>
            <person name="Tallon L.J."/>
            <person name="Tambunga G."/>
            <person name="Toriumi M.J."/>
            <person name="Town C.D."/>
            <person name="Utterback T."/>
            <person name="Van Aken S."/>
            <person name="Vaysberg M."/>
            <person name="Vysotskaia V.S."/>
            <person name="Walker M."/>
            <person name="Wu D."/>
            <person name="Yu G."/>
            <person name="Fraser C.M."/>
            <person name="Venter J.C."/>
            <person name="Davis R.W."/>
        </authorList>
    </citation>
    <scope>NUCLEOTIDE SEQUENCE [LARGE SCALE GENOMIC DNA]</scope>
    <source>
        <strain>cv. Columbia</strain>
    </source>
</reference>
<reference key="3">
    <citation type="journal article" date="2017" name="Plant J.">
        <title>Araport11: a complete reannotation of the Arabidopsis thaliana reference genome.</title>
        <authorList>
            <person name="Cheng C.Y."/>
            <person name="Krishnakumar V."/>
            <person name="Chan A.P."/>
            <person name="Thibaud-Nissen F."/>
            <person name="Schobel S."/>
            <person name="Town C.D."/>
        </authorList>
    </citation>
    <scope>GENOME REANNOTATION</scope>
    <source>
        <strain>cv. Columbia</strain>
    </source>
</reference>
<reference key="4">
    <citation type="journal article" date="2003" name="Science">
        <title>Empirical analysis of transcriptional activity in the Arabidopsis genome.</title>
        <authorList>
            <person name="Yamada K."/>
            <person name="Lim J."/>
            <person name="Dale J.M."/>
            <person name="Chen H."/>
            <person name="Shinn P."/>
            <person name="Palm C.J."/>
            <person name="Southwick A.M."/>
            <person name="Wu H.C."/>
            <person name="Kim C.J."/>
            <person name="Nguyen M."/>
            <person name="Pham P.K."/>
            <person name="Cheuk R.F."/>
            <person name="Karlin-Newmann G."/>
            <person name="Liu S.X."/>
            <person name="Lam B."/>
            <person name="Sakano H."/>
            <person name="Wu T."/>
            <person name="Yu G."/>
            <person name="Miranda M."/>
            <person name="Quach H.L."/>
            <person name="Tripp M."/>
            <person name="Chang C.H."/>
            <person name="Lee J.M."/>
            <person name="Toriumi M.J."/>
            <person name="Chan M.M."/>
            <person name="Tang C.C."/>
            <person name="Onodera C.S."/>
            <person name="Deng J.M."/>
            <person name="Akiyama K."/>
            <person name="Ansari Y."/>
            <person name="Arakawa T."/>
            <person name="Banh J."/>
            <person name="Banno F."/>
            <person name="Bowser L."/>
            <person name="Brooks S.Y."/>
            <person name="Carninci P."/>
            <person name="Chao Q."/>
            <person name="Choy N."/>
            <person name="Enju A."/>
            <person name="Goldsmith A.D."/>
            <person name="Gurjal M."/>
            <person name="Hansen N.F."/>
            <person name="Hayashizaki Y."/>
            <person name="Johnson-Hopson C."/>
            <person name="Hsuan V.W."/>
            <person name="Iida K."/>
            <person name="Karnes M."/>
            <person name="Khan S."/>
            <person name="Koesema E."/>
            <person name="Ishida J."/>
            <person name="Jiang P.X."/>
            <person name="Jones T."/>
            <person name="Kawai J."/>
            <person name="Kamiya A."/>
            <person name="Meyers C."/>
            <person name="Nakajima M."/>
            <person name="Narusaka M."/>
            <person name="Seki M."/>
            <person name="Sakurai T."/>
            <person name="Satou M."/>
            <person name="Tamse R."/>
            <person name="Vaysberg M."/>
            <person name="Wallender E.K."/>
            <person name="Wong C."/>
            <person name="Yamamura Y."/>
            <person name="Yuan S."/>
            <person name="Shinozaki K."/>
            <person name="Davis R.W."/>
            <person name="Theologis A."/>
            <person name="Ecker J.R."/>
        </authorList>
    </citation>
    <scope>NUCLEOTIDE SEQUENCE [LARGE SCALE MRNA]</scope>
    <source>
        <strain>cv. Columbia</strain>
    </source>
</reference>
<reference key="5">
    <citation type="journal article" date="2002" name="J. Biol. Chem.">
        <title>Characterization of a family of IAA-amino acid conjugate hydrolases from Arabidopsis.</title>
        <authorList>
            <person name="LeClere S."/>
            <person name="Tellez R."/>
            <person name="Rampey R.A."/>
            <person name="Matsuda S.P.T."/>
            <person name="Bartel B."/>
        </authorList>
    </citation>
    <scope>NUCLEOTIDE SEQUENCE [LARGE SCALE MRNA] OF 24-464</scope>
    <scope>GENE FAMILY</scope>
    <source>
        <strain>cv. Landsberg erecta</strain>
    </source>
</reference>
<reference key="6">
    <citation type="journal article" date="2013" name="J. Biol. Chem.">
        <title>The amidohydrolases IAR3 and ILL6 contribute to jasmonoyl-isoleucine hormone turnover and generate 12-hydroxyjasmonic acid upon wounding in Arabidopsis leaves.</title>
        <authorList>
            <person name="Widemann E."/>
            <person name="Miesch L."/>
            <person name="Lugan R."/>
            <person name="Holder E."/>
            <person name="Heinrich C."/>
            <person name="Aubert Y."/>
            <person name="Miesch M."/>
            <person name="Pinot F."/>
            <person name="Heitz T."/>
        </authorList>
    </citation>
    <scope>FUNCTION</scope>
    <scope>CATALYTIC ACTIVITY</scope>
</reference>
<organism>
    <name type="scientific">Arabidopsis thaliana</name>
    <name type="common">Mouse-ear cress</name>
    <dbReference type="NCBI Taxonomy" id="3702"/>
    <lineage>
        <taxon>Eukaryota</taxon>
        <taxon>Viridiplantae</taxon>
        <taxon>Streptophyta</taxon>
        <taxon>Embryophyta</taxon>
        <taxon>Tracheophyta</taxon>
        <taxon>Spermatophyta</taxon>
        <taxon>Magnoliopsida</taxon>
        <taxon>eudicotyledons</taxon>
        <taxon>Gunneridae</taxon>
        <taxon>Pentapetalae</taxon>
        <taxon>rosids</taxon>
        <taxon>malvids</taxon>
        <taxon>Brassicales</taxon>
        <taxon>Brassicaceae</taxon>
        <taxon>Camelineae</taxon>
        <taxon>Arabidopsis</taxon>
    </lineage>
</organism>
<accession>Q8VYX0</accession>
<accession>O81702</accession>
<accession>Q94LA5</accession>
<protein>
    <recommendedName>
        <fullName evidence="4">IAA-amino acid hydrolase ILR1-like 6</fullName>
        <ecNumber evidence="6">3.5.1.-</ecNumber>
    </recommendedName>
    <alternativeName>
        <fullName evidence="5">Protein gr1</fullName>
    </alternativeName>
    <alternativeName>
        <fullName evidence="6">jasmonoyl-L-amino acid hydrolase</fullName>
        <ecNumber evidence="3">3.5.1.127</ecNumber>
    </alternativeName>
</protein>
<evidence type="ECO:0000250" key="1">
    <source>
        <dbReference type="UniProtKB" id="P54970"/>
    </source>
</evidence>
<evidence type="ECO:0000255" key="2"/>
<evidence type="ECO:0000269" key="3">
    <source>
    </source>
</evidence>
<evidence type="ECO:0000303" key="4">
    <source>
    </source>
</evidence>
<evidence type="ECO:0000303" key="5">
    <source ref="1"/>
</evidence>
<evidence type="ECO:0000305" key="6"/>
<evidence type="ECO:0000312" key="7">
    <source>
        <dbReference type="Araport" id="AT1G44350"/>
    </source>
</evidence>
<evidence type="ECO:0000312" key="8">
    <source>
        <dbReference type="EMBL" id="AAK43477.1"/>
    </source>
</evidence>
<comment type="function">
    <text evidence="3">Hydrolyzes certain amino acid conjugates of the plant growth regulator indole-3-acetic acid (IAA). Also hydrolyzes amino acid conjugates of jasmonic acid and 12-hydroxy jasmonic acid.</text>
</comment>
<comment type="catalytic activity">
    <reaction evidence="3">
        <text>a jasmonyl-L-amino acid + H2O = a jasmonate + an L-alpha-amino acid</text>
        <dbReference type="Rhea" id="RHEA:52028"/>
        <dbReference type="ChEBI" id="CHEBI:15377"/>
        <dbReference type="ChEBI" id="CHEBI:59869"/>
        <dbReference type="ChEBI" id="CHEBI:136183"/>
        <dbReference type="ChEBI" id="CHEBI:136184"/>
        <dbReference type="EC" id="3.5.1.127"/>
    </reaction>
</comment>
<comment type="similarity">
    <text evidence="6">Belongs to the peptidase M20 family.</text>
</comment>
<sequence length="464" mass="50820">MDNLRKLNLLSVSLTIIFVSLTIATNLPFFEVKYPNNNPFGMLLRPTPIKNQSLGLPAHVGSDECRVWTKACSDEILRLTYQPDNVAWLKRVRRTIHENPELAFEEYETSRLIRSELDRMGIMYRYPLAKTGIRAWIGSGGPPFVAVRADMDALPIQEAVEWEHISKVAGKMHACGHDAHVTMLLGAAHILKAREHLLKGTVVLLFQPAEEAGNGAKNMIEDGALDDVEAIFAVHVSHIHPTGVIGSRSGPLLAGCGIFRAVITSEDSRGAANLLLAASSAVISLQGIVSREASPLDSQVVSVTSFDGGHSLDVAPDTVVLGGTFRAFSNSSFYYLKKRIQEVLMDQVGVFGCQATVNFFEKQNAIYPPTTNNDATYNHLKKVTIDLLGDSHFTLAPQMMGAEDFAFYSEIIPAAFYFIGIRNEELGSVHIAHSPHFMIDEDSLPVGAAVHAAVAERYLNDKHS</sequence>
<name>ILL6_ARATH</name>
<dbReference type="EC" id="3.5.1.-" evidence="6"/>
<dbReference type="EC" id="3.5.1.127" evidence="3"/>
<dbReference type="EMBL" id="AJ010735">
    <property type="protein sequence ID" value="CAA09330.1"/>
    <property type="molecule type" value="Genomic_DNA"/>
</dbReference>
<dbReference type="EMBL" id="AC084807">
    <property type="protein sequence ID" value="AAK43477.1"/>
    <property type="molecule type" value="Genomic_DNA"/>
</dbReference>
<dbReference type="EMBL" id="CP002684">
    <property type="protein sequence ID" value="AEE32032.1"/>
    <property type="molecule type" value="Genomic_DNA"/>
</dbReference>
<dbReference type="EMBL" id="AY072322">
    <property type="protein sequence ID" value="AAL61929.1"/>
    <property type="molecule type" value="mRNA"/>
</dbReference>
<dbReference type="EMBL" id="AY074380">
    <property type="protein sequence ID" value="AAL67076.1"/>
    <property type="molecule type" value="mRNA"/>
</dbReference>
<dbReference type="EMBL" id="AY117292">
    <property type="protein sequence ID" value="AAM51367.1"/>
    <property type="molecule type" value="mRNA"/>
</dbReference>
<dbReference type="EMBL" id="AY065996">
    <property type="protein sequence ID" value="AAL47552.1"/>
    <property type="molecule type" value="mRNA"/>
</dbReference>
<dbReference type="RefSeq" id="NP_175086.1">
    <property type="nucleotide sequence ID" value="NM_103546.4"/>
</dbReference>
<dbReference type="SMR" id="Q8VYX0"/>
<dbReference type="FunCoup" id="Q8VYX0">
    <property type="interactions" value="118"/>
</dbReference>
<dbReference type="STRING" id="3702.Q8VYX0"/>
<dbReference type="MEROPS" id="M20.A05"/>
<dbReference type="PaxDb" id="3702-AT1G44350.1"/>
<dbReference type="ProteomicsDB" id="228847"/>
<dbReference type="EnsemblPlants" id="AT1G44350.1">
    <property type="protein sequence ID" value="AT1G44350.1"/>
    <property type="gene ID" value="AT1G44350"/>
</dbReference>
<dbReference type="GeneID" id="841026"/>
<dbReference type="Gramene" id="AT1G44350.1">
    <property type="protein sequence ID" value="AT1G44350.1"/>
    <property type="gene ID" value="AT1G44350"/>
</dbReference>
<dbReference type="KEGG" id="ath:AT1G44350"/>
<dbReference type="Araport" id="AT1G44350"/>
<dbReference type="TAIR" id="AT1G44350">
    <property type="gene designation" value="ILL6"/>
</dbReference>
<dbReference type="eggNOG" id="ENOG502QQEM">
    <property type="taxonomic scope" value="Eukaryota"/>
</dbReference>
<dbReference type="HOGENOM" id="CLU_023257_0_0_1"/>
<dbReference type="InParanoid" id="Q8VYX0"/>
<dbReference type="OMA" id="TYWVRLA"/>
<dbReference type="PhylomeDB" id="Q8VYX0"/>
<dbReference type="BioCyc" id="ARA:AT1G44350-MONOMER"/>
<dbReference type="BioCyc" id="MetaCyc:AT1G44350-MONOMER"/>
<dbReference type="BRENDA" id="3.5.1.127">
    <property type="organism ID" value="399"/>
</dbReference>
<dbReference type="PRO" id="PR:Q8VYX0"/>
<dbReference type="Proteomes" id="UP000006548">
    <property type="component" value="Chromosome 1"/>
</dbReference>
<dbReference type="ExpressionAtlas" id="Q8VYX0">
    <property type="expression patterns" value="baseline and differential"/>
</dbReference>
<dbReference type="GO" id="GO:1990206">
    <property type="term" value="F:jasmonyl-Ile conjugate hydrolase activity"/>
    <property type="evidence" value="ECO:0000315"/>
    <property type="project" value="TAIR"/>
</dbReference>
<dbReference type="GO" id="GO:0046872">
    <property type="term" value="F:metal ion binding"/>
    <property type="evidence" value="ECO:0007669"/>
    <property type="project" value="UniProtKB-KW"/>
</dbReference>
<dbReference type="GO" id="GO:0009850">
    <property type="term" value="P:auxin metabolic process"/>
    <property type="evidence" value="ECO:0007669"/>
    <property type="project" value="InterPro"/>
</dbReference>
<dbReference type="GO" id="GO:0009694">
    <property type="term" value="P:jasmonic acid metabolic process"/>
    <property type="evidence" value="ECO:0000315"/>
    <property type="project" value="TAIR"/>
</dbReference>
<dbReference type="GO" id="GO:0010112">
    <property type="term" value="P:regulation of systemic acquired resistance"/>
    <property type="evidence" value="ECO:0000270"/>
    <property type="project" value="TAIR"/>
</dbReference>
<dbReference type="GO" id="GO:0009753">
    <property type="term" value="P:response to jasmonic acid"/>
    <property type="evidence" value="ECO:0000315"/>
    <property type="project" value="TAIR"/>
</dbReference>
<dbReference type="CDD" id="cd08017">
    <property type="entry name" value="M20_IAA_Hyd"/>
    <property type="match status" value="1"/>
</dbReference>
<dbReference type="FunFam" id="3.30.70.360:FF:000001">
    <property type="entry name" value="N-acetyldiaminopimelate deacetylase"/>
    <property type="match status" value="1"/>
</dbReference>
<dbReference type="Gene3D" id="3.30.70.360">
    <property type="match status" value="1"/>
</dbReference>
<dbReference type="Gene3D" id="3.40.630.10">
    <property type="entry name" value="Zn peptidases"/>
    <property type="match status" value="1"/>
</dbReference>
<dbReference type="InterPro" id="IPR017439">
    <property type="entry name" value="Amidohydrolase"/>
</dbReference>
<dbReference type="InterPro" id="IPR036264">
    <property type="entry name" value="Bact_exopeptidase_dim_dom"/>
</dbReference>
<dbReference type="InterPro" id="IPR044757">
    <property type="entry name" value="ILR1-like_Hyd"/>
</dbReference>
<dbReference type="InterPro" id="IPR002933">
    <property type="entry name" value="Peptidase_M20"/>
</dbReference>
<dbReference type="NCBIfam" id="TIGR01891">
    <property type="entry name" value="amidohydrolases"/>
    <property type="match status" value="1"/>
</dbReference>
<dbReference type="PANTHER" id="PTHR11014:SF62">
    <property type="entry name" value="IAA-AMINO ACID HYDROLASE ILR1-LIKE 6"/>
    <property type="match status" value="1"/>
</dbReference>
<dbReference type="PANTHER" id="PTHR11014">
    <property type="entry name" value="PEPTIDASE M20 FAMILY MEMBER"/>
    <property type="match status" value="1"/>
</dbReference>
<dbReference type="Pfam" id="PF01546">
    <property type="entry name" value="Peptidase_M20"/>
    <property type="match status" value="1"/>
</dbReference>
<dbReference type="PIRSF" id="PIRSF005962">
    <property type="entry name" value="Pept_M20D_amidohydro"/>
    <property type="match status" value="1"/>
</dbReference>
<dbReference type="SUPFAM" id="SSF55031">
    <property type="entry name" value="Bacterial exopeptidase dimerisation domain"/>
    <property type="match status" value="1"/>
</dbReference>
<dbReference type="SUPFAM" id="SSF53187">
    <property type="entry name" value="Zn-dependent exopeptidases"/>
    <property type="match status" value="1"/>
</dbReference>
<feature type="signal peptide" evidence="2">
    <location>
        <begin position="1"/>
        <end position="24"/>
    </location>
</feature>
<feature type="chain" id="PRO_0000045472" description="IAA-amino acid hydrolase ILR1-like 6">
    <location>
        <begin position="25"/>
        <end position="464"/>
    </location>
</feature>
<feature type="binding site" evidence="1">
    <location>
        <position position="175"/>
    </location>
    <ligand>
        <name>Mn(2+)</name>
        <dbReference type="ChEBI" id="CHEBI:29035"/>
        <label>1</label>
    </ligand>
</feature>
<feature type="binding site" evidence="1">
    <location>
        <position position="175"/>
    </location>
    <ligand>
        <name>Mn(2+)</name>
        <dbReference type="ChEBI" id="CHEBI:29035"/>
        <label>2</label>
    </ligand>
</feature>
<feature type="binding site" evidence="1">
    <location>
        <position position="177"/>
    </location>
    <ligand>
        <name>Mn(2+)</name>
        <dbReference type="ChEBI" id="CHEBI:29035"/>
        <label>2</label>
    </ligand>
</feature>
<feature type="binding site" evidence="1">
    <location>
        <position position="211"/>
    </location>
    <ligand>
        <name>Mn(2+)</name>
        <dbReference type="ChEBI" id="CHEBI:29035"/>
        <label>1</label>
    </ligand>
</feature>
<feature type="binding site" evidence="1">
    <location>
        <position position="235"/>
    </location>
    <ligand>
        <name>Mn(2+)</name>
        <dbReference type="ChEBI" id="CHEBI:29035"/>
        <label>2</label>
    </ligand>
</feature>
<feature type="binding site" evidence="1">
    <location>
        <position position="433"/>
    </location>
    <ligand>
        <name>Mn(2+)</name>
        <dbReference type="ChEBI" id="CHEBI:29035"/>
        <label>1</label>
    </ligand>
</feature>
<feature type="sequence conflict" description="In Ref. 5; AAL47552." evidence="6" ref="5">
    <original>R</original>
    <variation>W</variation>
    <location>
        <position position="66"/>
    </location>
</feature>
<feature type="sequence conflict" description="In Ref. 1; CAA09330 and 5; AAL47552." evidence="6" ref="1 5">
    <original>I</original>
    <variation>V</variation>
    <location>
        <position position="113"/>
    </location>
</feature>
<feature type="sequence conflict" description="In Ref. 5; AAL47552." evidence="6" ref="5">
    <original>I</original>
    <variation>K</variation>
    <location>
        <position position="165"/>
    </location>
</feature>
<keyword id="KW-0378">Hydrolase</keyword>
<keyword id="KW-0464">Manganese</keyword>
<keyword id="KW-0479">Metal-binding</keyword>
<keyword id="KW-1185">Reference proteome</keyword>
<keyword id="KW-0732">Signal</keyword>
<gene>
    <name evidence="4" type="primary">ILL6</name>
    <name evidence="5" type="synonym">GR1</name>
    <name evidence="7" type="ordered locus">At1g44350</name>
    <name evidence="8" type="ORF">T18F15.9</name>
</gene>
<proteinExistence type="evidence at protein level"/>